<proteinExistence type="inferred from homology"/>
<dbReference type="EC" id="7.3.2.3" evidence="1"/>
<dbReference type="EMBL" id="BX936398">
    <property type="protein sequence ID" value="CAH21970.1"/>
    <property type="molecule type" value="Genomic_DNA"/>
</dbReference>
<dbReference type="RefSeq" id="WP_011192745.1">
    <property type="nucleotide sequence ID" value="NC_006155.1"/>
</dbReference>
<dbReference type="SMR" id="Q668K6"/>
<dbReference type="GeneID" id="49785255"/>
<dbReference type="KEGG" id="ypo:BZ17_3897"/>
<dbReference type="KEGG" id="yps:YPTB2732"/>
<dbReference type="PATRIC" id="fig|273123.14.peg.4097"/>
<dbReference type="Proteomes" id="UP000001011">
    <property type="component" value="Chromosome"/>
</dbReference>
<dbReference type="GO" id="GO:0043190">
    <property type="term" value="C:ATP-binding cassette (ABC) transporter complex"/>
    <property type="evidence" value="ECO:0007669"/>
    <property type="project" value="InterPro"/>
</dbReference>
<dbReference type="GO" id="GO:0015419">
    <property type="term" value="F:ABC-type sulfate transporter activity"/>
    <property type="evidence" value="ECO:0007669"/>
    <property type="project" value="InterPro"/>
</dbReference>
<dbReference type="GO" id="GO:0102025">
    <property type="term" value="F:ABC-type thiosulfate transporter activity"/>
    <property type="evidence" value="ECO:0007669"/>
    <property type="project" value="RHEA"/>
</dbReference>
<dbReference type="GO" id="GO:0005524">
    <property type="term" value="F:ATP binding"/>
    <property type="evidence" value="ECO:0007669"/>
    <property type="project" value="UniProtKB-KW"/>
</dbReference>
<dbReference type="GO" id="GO:0016887">
    <property type="term" value="F:ATP hydrolysis activity"/>
    <property type="evidence" value="ECO:0007669"/>
    <property type="project" value="InterPro"/>
</dbReference>
<dbReference type="CDD" id="cd03296">
    <property type="entry name" value="ABC_CysA_sulfate_importer"/>
    <property type="match status" value="1"/>
</dbReference>
<dbReference type="FunFam" id="3.40.50.300:FF:000227">
    <property type="entry name" value="Sulfate/thiosulfate import ATP-binding protein CysA"/>
    <property type="match status" value="1"/>
</dbReference>
<dbReference type="Gene3D" id="3.40.50.300">
    <property type="entry name" value="P-loop containing nucleotide triphosphate hydrolases"/>
    <property type="match status" value="1"/>
</dbReference>
<dbReference type="InterPro" id="IPR003593">
    <property type="entry name" value="AAA+_ATPase"/>
</dbReference>
<dbReference type="InterPro" id="IPR050093">
    <property type="entry name" value="ABC_SmlMolc_Importer"/>
</dbReference>
<dbReference type="InterPro" id="IPR003439">
    <property type="entry name" value="ABC_transporter-like_ATP-bd"/>
</dbReference>
<dbReference type="InterPro" id="IPR017871">
    <property type="entry name" value="ABC_transporter-like_CS"/>
</dbReference>
<dbReference type="InterPro" id="IPR008995">
    <property type="entry name" value="Mo/tungstate-bd_C_term_dom"/>
</dbReference>
<dbReference type="InterPro" id="IPR027417">
    <property type="entry name" value="P-loop_NTPase"/>
</dbReference>
<dbReference type="InterPro" id="IPR005666">
    <property type="entry name" value="Sulph_transpt1"/>
</dbReference>
<dbReference type="NCBIfam" id="TIGR00968">
    <property type="entry name" value="3a0106s01"/>
    <property type="match status" value="1"/>
</dbReference>
<dbReference type="NCBIfam" id="NF008105">
    <property type="entry name" value="PRK10851.1"/>
    <property type="match status" value="1"/>
</dbReference>
<dbReference type="PANTHER" id="PTHR42781">
    <property type="entry name" value="SPERMIDINE/PUTRESCINE IMPORT ATP-BINDING PROTEIN POTA"/>
    <property type="match status" value="1"/>
</dbReference>
<dbReference type="PANTHER" id="PTHR42781:SF4">
    <property type="entry name" value="SPERMIDINE_PUTRESCINE IMPORT ATP-BINDING PROTEIN POTA"/>
    <property type="match status" value="1"/>
</dbReference>
<dbReference type="Pfam" id="PF00005">
    <property type="entry name" value="ABC_tran"/>
    <property type="match status" value="1"/>
</dbReference>
<dbReference type="SMART" id="SM00382">
    <property type="entry name" value="AAA"/>
    <property type="match status" value="1"/>
</dbReference>
<dbReference type="SUPFAM" id="SSF50331">
    <property type="entry name" value="MOP-like"/>
    <property type="match status" value="1"/>
</dbReference>
<dbReference type="SUPFAM" id="SSF52540">
    <property type="entry name" value="P-loop containing nucleoside triphosphate hydrolases"/>
    <property type="match status" value="1"/>
</dbReference>
<dbReference type="PROSITE" id="PS00211">
    <property type="entry name" value="ABC_TRANSPORTER_1"/>
    <property type="match status" value="1"/>
</dbReference>
<dbReference type="PROSITE" id="PS50893">
    <property type="entry name" value="ABC_TRANSPORTER_2"/>
    <property type="match status" value="1"/>
</dbReference>
<dbReference type="PROSITE" id="PS51237">
    <property type="entry name" value="CYSA"/>
    <property type="match status" value="1"/>
</dbReference>
<evidence type="ECO:0000255" key="1">
    <source>
        <dbReference type="HAMAP-Rule" id="MF_01701"/>
    </source>
</evidence>
<comment type="function">
    <text evidence="1">Part of the ABC transporter complex CysAWTP involved in sulfate/thiosulfate import. Responsible for energy coupling to the transport system.</text>
</comment>
<comment type="catalytic activity">
    <reaction evidence="1">
        <text>sulfate(out) + ATP + H2O = sulfate(in) + ADP + phosphate + H(+)</text>
        <dbReference type="Rhea" id="RHEA:10192"/>
        <dbReference type="ChEBI" id="CHEBI:15377"/>
        <dbReference type="ChEBI" id="CHEBI:15378"/>
        <dbReference type="ChEBI" id="CHEBI:16189"/>
        <dbReference type="ChEBI" id="CHEBI:30616"/>
        <dbReference type="ChEBI" id="CHEBI:43474"/>
        <dbReference type="ChEBI" id="CHEBI:456216"/>
        <dbReference type="EC" id="7.3.2.3"/>
    </reaction>
</comment>
<comment type="catalytic activity">
    <reaction evidence="1">
        <text>thiosulfate(out) + ATP + H2O = thiosulfate(in) + ADP + phosphate + H(+)</text>
        <dbReference type="Rhea" id="RHEA:29871"/>
        <dbReference type="ChEBI" id="CHEBI:15377"/>
        <dbReference type="ChEBI" id="CHEBI:15378"/>
        <dbReference type="ChEBI" id="CHEBI:30616"/>
        <dbReference type="ChEBI" id="CHEBI:33542"/>
        <dbReference type="ChEBI" id="CHEBI:43474"/>
        <dbReference type="ChEBI" id="CHEBI:456216"/>
        <dbReference type="EC" id="7.3.2.3"/>
    </reaction>
</comment>
<comment type="subunit">
    <text evidence="1">The complex is composed of two ATP-binding proteins (CysA), two transmembrane proteins (CysT and CysW) and a solute-binding protein (CysP).</text>
</comment>
<comment type="subcellular location">
    <subcellularLocation>
        <location evidence="1">Cell inner membrane</location>
        <topology evidence="1">Peripheral membrane protein</topology>
    </subcellularLocation>
</comment>
<comment type="similarity">
    <text evidence="1">Belongs to the ABC transporter superfamily. Sulfate/tungstate importer (TC 3.A.1.6) family.</text>
</comment>
<gene>
    <name evidence="1" type="primary">cysA</name>
    <name type="ordered locus">YPTB2732</name>
</gene>
<keyword id="KW-0067">ATP-binding</keyword>
<keyword id="KW-0997">Cell inner membrane</keyword>
<keyword id="KW-1003">Cell membrane</keyword>
<keyword id="KW-0472">Membrane</keyword>
<keyword id="KW-0547">Nucleotide-binding</keyword>
<keyword id="KW-0764">Sulfate transport</keyword>
<keyword id="KW-1278">Translocase</keyword>
<keyword id="KW-0813">Transport</keyword>
<organism>
    <name type="scientific">Yersinia pseudotuberculosis serotype I (strain IP32953)</name>
    <dbReference type="NCBI Taxonomy" id="273123"/>
    <lineage>
        <taxon>Bacteria</taxon>
        <taxon>Pseudomonadati</taxon>
        <taxon>Pseudomonadota</taxon>
        <taxon>Gammaproteobacteria</taxon>
        <taxon>Enterobacterales</taxon>
        <taxon>Yersiniaceae</taxon>
        <taxon>Yersinia</taxon>
    </lineage>
</organism>
<sequence length="363" mass="40705">MSIEINNISKYFGRTKVLNDITLDIPSGQMVALLGPSGSGKTTLLRIIAGLENQNAGRLSFHGTDVSRLHARDRRVGFVFQHYALFRHMTVFDNIAFGLTVLPRRERPNAAAIKQKVGQLLEMVQLGHLAERFPSQLSGGQKQRVALARALAVEPQILLLDEPFGALDAQVRKELRRWLRQLHEELKFTSVFVTHDQEEAMEVADRVVVMSQGNIEQVGTPDEVWREPATRFVLEFLGEVNRLSGEIRGSQLFIGAHHWPLDLAPMHQGSVDLFLRPWEMEVSTQSSDRCPLPVQVLEVSPRGHFWQLTVQPIGWHQDPISVVLPEGNIDAPVRGNRYYVGGLNARLYSGNQLLQPIALAQSA</sequence>
<reference key="1">
    <citation type="journal article" date="2004" name="Proc. Natl. Acad. Sci. U.S.A.">
        <title>Insights into the evolution of Yersinia pestis through whole-genome comparison with Yersinia pseudotuberculosis.</title>
        <authorList>
            <person name="Chain P.S.G."/>
            <person name="Carniel E."/>
            <person name="Larimer F.W."/>
            <person name="Lamerdin J."/>
            <person name="Stoutland P.O."/>
            <person name="Regala W.M."/>
            <person name="Georgescu A.M."/>
            <person name="Vergez L.M."/>
            <person name="Land M.L."/>
            <person name="Motin V.L."/>
            <person name="Brubaker R.R."/>
            <person name="Fowler J."/>
            <person name="Hinnebusch J."/>
            <person name="Marceau M."/>
            <person name="Medigue C."/>
            <person name="Simonet M."/>
            <person name="Chenal-Francisque V."/>
            <person name="Souza B."/>
            <person name="Dacheux D."/>
            <person name="Elliott J.M."/>
            <person name="Derbise A."/>
            <person name="Hauser L.J."/>
            <person name="Garcia E."/>
        </authorList>
    </citation>
    <scope>NUCLEOTIDE SEQUENCE [LARGE SCALE GENOMIC DNA]</scope>
    <source>
        <strain>IP32953</strain>
    </source>
</reference>
<feature type="chain" id="PRO_0000092305" description="Sulfate/thiosulfate import ATP-binding protein CysA">
    <location>
        <begin position="1"/>
        <end position="363"/>
    </location>
</feature>
<feature type="domain" description="ABC transporter" evidence="1">
    <location>
        <begin position="3"/>
        <end position="237"/>
    </location>
</feature>
<feature type="binding site" evidence="1">
    <location>
        <begin position="35"/>
        <end position="42"/>
    </location>
    <ligand>
        <name>ATP</name>
        <dbReference type="ChEBI" id="CHEBI:30616"/>
    </ligand>
</feature>
<name>CYSA_YERPS</name>
<protein>
    <recommendedName>
        <fullName evidence="1">Sulfate/thiosulfate import ATP-binding protein CysA</fullName>
        <ecNumber evidence="1">7.3.2.3</ecNumber>
    </recommendedName>
    <alternativeName>
        <fullName evidence="1">Sulfate-transporting ATPase</fullName>
    </alternativeName>
</protein>
<accession>Q668K6</accession>